<organism>
    <name type="scientific">Neurospora crassa (strain ATCC 24698 / 74-OR23-1A / CBS 708.71 / DSM 1257 / FGSC 987)</name>
    <dbReference type="NCBI Taxonomy" id="367110"/>
    <lineage>
        <taxon>Eukaryota</taxon>
        <taxon>Fungi</taxon>
        <taxon>Dikarya</taxon>
        <taxon>Ascomycota</taxon>
        <taxon>Pezizomycotina</taxon>
        <taxon>Sordariomycetes</taxon>
        <taxon>Sordariomycetidae</taxon>
        <taxon>Sordariales</taxon>
        <taxon>Sordariaceae</taxon>
        <taxon>Neurospora</taxon>
    </lineage>
</organism>
<protein>
    <recommendedName>
        <fullName evidence="1">Kynurenine 3-monooxygenase</fullName>
        <ecNumber evidence="1">1.14.13.9</ecNumber>
    </recommendedName>
    <alternativeName>
        <fullName evidence="1">Biosynthesis of nicotinic acid protein 4</fullName>
    </alternativeName>
    <alternativeName>
        <fullName evidence="1">Kynurenine 3-hydroxylase</fullName>
    </alternativeName>
    <alternativeName>
        <fullName>Nicotinic acid-requiring protein 3</fullName>
    </alternativeName>
</protein>
<comment type="function">
    <text evidence="1">Catalyzes the hydroxylation of L-kynurenine (L-Kyn) to form 3-hydroxy-L-kynurenine (L-3OHKyn). Required for synthesis of quinolinic acid.</text>
</comment>
<comment type="catalytic activity">
    <reaction evidence="1">
        <text>L-kynurenine + NADPH + O2 + H(+) = 3-hydroxy-L-kynurenine + NADP(+) + H2O</text>
        <dbReference type="Rhea" id="RHEA:20545"/>
        <dbReference type="ChEBI" id="CHEBI:15377"/>
        <dbReference type="ChEBI" id="CHEBI:15378"/>
        <dbReference type="ChEBI" id="CHEBI:15379"/>
        <dbReference type="ChEBI" id="CHEBI:57783"/>
        <dbReference type="ChEBI" id="CHEBI:57959"/>
        <dbReference type="ChEBI" id="CHEBI:58125"/>
        <dbReference type="ChEBI" id="CHEBI:58349"/>
        <dbReference type="EC" id="1.14.13.9"/>
    </reaction>
</comment>
<comment type="cofactor">
    <cofactor evidence="1">
        <name>FAD</name>
        <dbReference type="ChEBI" id="CHEBI:57692"/>
    </cofactor>
</comment>
<comment type="pathway">
    <text evidence="1">Cofactor biosynthesis; NAD(+) biosynthesis; quinolinate from L-kynurenine: step 1/3.</text>
</comment>
<comment type="subcellular location">
    <subcellularLocation>
        <location evidence="1">Mitochondrion outer membrane</location>
    </subcellularLocation>
</comment>
<comment type="similarity">
    <text evidence="1">Belongs to the aromatic-ring hydroxylase family. KMO subfamily.</text>
</comment>
<proteinExistence type="inferred from homology"/>
<feature type="chain" id="PRO_0000361930" description="Kynurenine 3-monooxygenase">
    <location>
        <begin position="1"/>
        <end position="512"/>
    </location>
</feature>
<keyword id="KW-0274">FAD</keyword>
<keyword id="KW-0285">Flavoprotein</keyword>
<keyword id="KW-0472">Membrane</keyword>
<keyword id="KW-0496">Mitochondrion</keyword>
<keyword id="KW-1000">Mitochondrion outer membrane</keyword>
<keyword id="KW-0503">Monooxygenase</keyword>
<keyword id="KW-0521">NADP</keyword>
<keyword id="KW-0560">Oxidoreductase</keyword>
<keyword id="KW-0662">Pyridine nucleotide biosynthesis</keyword>
<keyword id="KW-1185">Reference proteome</keyword>
<evidence type="ECO:0000255" key="1">
    <source>
        <dbReference type="HAMAP-Rule" id="MF_03018"/>
    </source>
</evidence>
<name>KMO_NEUCR</name>
<accession>Q7S3C9</accession>
<gene>
    <name type="primary">nic-3</name>
    <name type="synonym">bna4</name>
    <name type="ORF">NCU06924</name>
</gene>
<sequence length="512" mass="57889">MEERKQKVVVVGAGPVGSLAALYAANRGHDVEIYELRGDLRDPSTTPLNFTRSINLALSERGLNAMRHANQPRLIDYVKGVTIPMRGRMIHGKRPDGKLYEEAQDYDIHGRSILAIDRGDLNKRLLDMLEEMPNVTFFFNHKLTGADFKRNKAWFENKDESTSNPRDRAREIEVDFDFMIGADGAHSAVRYHLMKFSRMDYQQEYIDTLWCEFQIAPSSSSAKSKFRISPNHLHIWPGKEFMFIAIPSNDGSFTCTLFAPAAIYEQLEEAGRTGDTSSSIPEFFDMHFPGVTSLIAPADLIAQFQTNPHLPLISIKCKPYHFSSSVVIVGDAAHAMVPFYGQGMNAGLEDVRILFDILDKHDRMTNDDSSLEASQRELALAEYSAVRVADAHAINDLALQNYIEMRSSVLSPVYRWRKALEEWLSVYVPSLGWQTKYSRVSFGNERYSEVVKKSERQGQVLLRSLVGGVGLPMLAGGLFLWFRYKGALGRAAYGVFYNCMGMVCRTIHGRRR</sequence>
<reference key="1">
    <citation type="journal article" date="2003" name="Nature">
        <title>The genome sequence of the filamentous fungus Neurospora crassa.</title>
        <authorList>
            <person name="Galagan J.E."/>
            <person name="Calvo S.E."/>
            <person name="Borkovich K.A."/>
            <person name="Selker E.U."/>
            <person name="Read N.D."/>
            <person name="Jaffe D.B."/>
            <person name="FitzHugh W."/>
            <person name="Ma L.-J."/>
            <person name="Smirnov S."/>
            <person name="Purcell S."/>
            <person name="Rehman B."/>
            <person name="Elkins T."/>
            <person name="Engels R."/>
            <person name="Wang S."/>
            <person name="Nielsen C.B."/>
            <person name="Butler J."/>
            <person name="Endrizzi M."/>
            <person name="Qui D."/>
            <person name="Ianakiev P."/>
            <person name="Bell-Pedersen D."/>
            <person name="Nelson M.A."/>
            <person name="Werner-Washburne M."/>
            <person name="Selitrennikoff C.P."/>
            <person name="Kinsey J.A."/>
            <person name="Braun E.L."/>
            <person name="Zelter A."/>
            <person name="Schulte U."/>
            <person name="Kothe G.O."/>
            <person name="Jedd G."/>
            <person name="Mewes H.-W."/>
            <person name="Staben C."/>
            <person name="Marcotte E."/>
            <person name="Greenberg D."/>
            <person name="Roy A."/>
            <person name="Foley K."/>
            <person name="Naylor J."/>
            <person name="Stange-Thomann N."/>
            <person name="Barrett R."/>
            <person name="Gnerre S."/>
            <person name="Kamal M."/>
            <person name="Kamvysselis M."/>
            <person name="Mauceli E.W."/>
            <person name="Bielke C."/>
            <person name="Rudd S."/>
            <person name="Frishman D."/>
            <person name="Krystofova S."/>
            <person name="Rasmussen C."/>
            <person name="Metzenberg R.L."/>
            <person name="Perkins D.D."/>
            <person name="Kroken S."/>
            <person name="Cogoni C."/>
            <person name="Macino G."/>
            <person name="Catcheside D.E.A."/>
            <person name="Li W."/>
            <person name="Pratt R.J."/>
            <person name="Osmani S.A."/>
            <person name="DeSouza C.P.C."/>
            <person name="Glass N.L."/>
            <person name="Orbach M.J."/>
            <person name="Berglund J.A."/>
            <person name="Voelker R."/>
            <person name="Yarden O."/>
            <person name="Plamann M."/>
            <person name="Seiler S."/>
            <person name="Dunlap J.C."/>
            <person name="Radford A."/>
            <person name="Aramayo R."/>
            <person name="Natvig D.O."/>
            <person name="Alex L.A."/>
            <person name="Mannhaupt G."/>
            <person name="Ebbole D.J."/>
            <person name="Freitag M."/>
            <person name="Paulsen I."/>
            <person name="Sachs M.S."/>
            <person name="Lander E.S."/>
            <person name="Nusbaum C."/>
            <person name="Birren B.W."/>
        </authorList>
    </citation>
    <scope>NUCLEOTIDE SEQUENCE [LARGE SCALE GENOMIC DNA]</scope>
    <source>
        <strain>ATCC 24698 / 74-OR23-1A / CBS 708.71 / DSM 1257 / FGSC 987</strain>
    </source>
</reference>
<dbReference type="EC" id="1.14.13.9" evidence="1"/>
<dbReference type="EMBL" id="CM002242">
    <property type="protein sequence ID" value="EAA30035.3"/>
    <property type="molecule type" value="Genomic_DNA"/>
</dbReference>
<dbReference type="RefSeq" id="XP_959271.3">
    <property type="nucleotide sequence ID" value="XM_954178.3"/>
</dbReference>
<dbReference type="SMR" id="Q7S3C9"/>
<dbReference type="FunCoup" id="Q7S3C9">
    <property type="interactions" value="726"/>
</dbReference>
<dbReference type="STRING" id="367110.Q7S3C9"/>
<dbReference type="PaxDb" id="5141-EFNCRP00000006781"/>
<dbReference type="EnsemblFungi" id="EAA30035">
    <property type="protein sequence ID" value="EAA30035"/>
    <property type="gene ID" value="NCU06924"/>
</dbReference>
<dbReference type="GeneID" id="3875379"/>
<dbReference type="KEGG" id="ncr:NCU06924"/>
<dbReference type="VEuPathDB" id="FungiDB:NCU06924"/>
<dbReference type="HOGENOM" id="CLU_023210_2_1_1"/>
<dbReference type="InParanoid" id="Q7S3C9"/>
<dbReference type="OrthoDB" id="10053569at2759"/>
<dbReference type="UniPathway" id="UPA00253">
    <property type="reaction ID" value="UER00328"/>
</dbReference>
<dbReference type="Proteomes" id="UP000001805">
    <property type="component" value="Chromosome 7, Linkage Group VII"/>
</dbReference>
<dbReference type="GO" id="GO:0005741">
    <property type="term" value="C:mitochondrial outer membrane"/>
    <property type="evidence" value="ECO:0000318"/>
    <property type="project" value="GO_Central"/>
</dbReference>
<dbReference type="GO" id="GO:0071949">
    <property type="term" value="F:FAD binding"/>
    <property type="evidence" value="ECO:0007669"/>
    <property type="project" value="InterPro"/>
</dbReference>
<dbReference type="GO" id="GO:0004502">
    <property type="term" value="F:kynurenine 3-monooxygenase activity"/>
    <property type="evidence" value="ECO:0000318"/>
    <property type="project" value="GO_Central"/>
</dbReference>
<dbReference type="GO" id="GO:0034354">
    <property type="term" value="P:'de novo' NAD biosynthetic process from L-tryptophan"/>
    <property type="evidence" value="ECO:0007669"/>
    <property type="project" value="UniProtKB-UniRule"/>
</dbReference>
<dbReference type="GO" id="GO:0043420">
    <property type="term" value="P:anthranilate metabolic process"/>
    <property type="evidence" value="ECO:0007669"/>
    <property type="project" value="UniProtKB-UniRule"/>
</dbReference>
<dbReference type="GO" id="GO:0070189">
    <property type="term" value="P:kynurenine metabolic process"/>
    <property type="evidence" value="ECO:0000318"/>
    <property type="project" value="GO_Central"/>
</dbReference>
<dbReference type="GO" id="GO:0006569">
    <property type="term" value="P:L-tryptophan catabolic process"/>
    <property type="evidence" value="ECO:0007669"/>
    <property type="project" value="UniProtKB-UniRule"/>
</dbReference>
<dbReference type="GO" id="GO:0019805">
    <property type="term" value="P:quinolinate biosynthetic process"/>
    <property type="evidence" value="ECO:0007669"/>
    <property type="project" value="UniProtKB-UniRule"/>
</dbReference>
<dbReference type="FunFam" id="3.50.50.60:FF:000129">
    <property type="entry name" value="Kynurenine 3-monooxygenase"/>
    <property type="match status" value="1"/>
</dbReference>
<dbReference type="Gene3D" id="3.50.50.60">
    <property type="entry name" value="FAD/NAD(P)-binding domain"/>
    <property type="match status" value="1"/>
</dbReference>
<dbReference type="HAMAP" id="MF_01971">
    <property type="entry name" value="Kynurenine_monooxygenase"/>
    <property type="match status" value="1"/>
</dbReference>
<dbReference type="InterPro" id="IPR002938">
    <property type="entry name" value="FAD-bd"/>
</dbReference>
<dbReference type="InterPro" id="IPR036188">
    <property type="entry name" value="FAD/NAD-bd_sf"/>
</dbReference>
<dbReference type="InterPro" id="IPR027545">
    <property type="entry name" value="Kynurenine_monooxygenase"/>
</dbReference>
<dbReference type="PANTHER" id="PTHR46028">
    <property type="entry name" value="KYNURENINE 3-MONOOXYGENASE"/>
    <property type="match status" value="1"/>
</dbReference>
<dbReference type="PANTHER" id="PTHR46028:SF2">
    <property type="entry name" value="KYNURENINE 3-MONOOXYGENASE"/>
    <property type="match status" value="1"/>
</dbReference>
<dbReference type="Pfam" id="PF01494">
    <property type="entry name" value="FAD_binding_3"/>
    <property type="match status" value="1"/>
</dbReference>
<dbReference type="PRINTS" id="PR00420">
    <property type="entry name" value="RNGMNOXGNASE"/>
</dbReference>
<dbReference type="SUPFAM" id="SSF51905">
    <property type="entry name" value="FAD/NAD(P)-binding domain"/>
    <property type="match status" value="1"/>
</dbReference>